<dbReference type="EC" id="1.6.5.9" evidence="1"/>
<dbReference type="EMBL" id="AP006716">
    <property type="protein sequence ID" value="BAE05319.1"/>
    <property type="molecule type" value="Genomic_DNA"/>
</dbReference>
<dbReference type="RefSeq" id="WP_011276277.1">
    <property type="nucleotide sequence ID" value="NC_007168.1"/>
</dbReference>
<dbReference type="SMR" id="Q4L4V6"/>
<dbReference type="KEGG" id="sha:SH2010"/>
<dbReference type="eggNOG" id="COG1252">
    <property type="taxonomic scope" value="Bacteria"/>
</dbReference>
<dbReference type="HOGENOM" id="CLU_021377_7_2_9"/>
<dbReference type="OrthoDB" id="9781621at2"/>
<dbReference type="Proteomes" id="UP000000543">
    <property type="component" value="Chromosome"/>
</dbReference>
<dbReference type="GO" id="GO:0005886">
    <property type="term" value="C:plasma membrane"/>
    <property type="evidence" value="ECO:0007669"/>
    <property type="project" value="UniProtKB-SubCell"/>
</dbReference>
<dbReference type="GO" id="GO:0003955">
    <property type="term" value="F:NAD(P)H dehydrogenase (quinone) activity"/>
    <property type="evidence" value="ECO:0007669"/>
    <property type="project" value="TreeGrafter"/>
</dbReference>
<dbReference type="GO" id="GO:0050136">
    <property type="term" value="F:NADH:ubiquinone reductase (non-electrogenic) activity"/>
    <property type="evidence" value="ECO:0007669"/>
    <property type="project" value="UniProtKB-EC"/>
</dbReference>
<dbReference type="GO" id="GO:0019646">
    <property type="term" value="P:aerobic electron transport chain"/>
    <property type="evidence" value="ECO:0007669"/>
    <property type="project" value="TreeGrafter"/>
</dbReference>
<dbReference type="Gene3D" id="3.50.50.100">
    <property type="match status" value="1"/>
</dbReference>
<dbReference type="InterPro" id="IPR036188">
    <property type="entry name" value="FAD/NAD-bd_sf"/>
</dbReference>
<dbReference type="InterPro" id="IPR023753">
    <property type="entry name" value="FAD/NAD-binding_dom"/>
</dbReference>
<dbReference type="InterPro" id="IPR051169">
    <property type="entry name" value="NADH-Q_oxidoreductase"/>
</dbReference>
<dbReference type="PANTHER" id="PTHR42913:SF3">
    <property type="entry name" value="64 KDA MITOCHONDRIAL NADH DEHYDROGENASE (EUROFUNG)"/>
    <property type="match status" value="1"/>
</dbReference>
<dbReference type="PANTHER" id="PTHR42913">
    <property type="entry name" value="APOPTOSIS-INDUCING FACTOR 1"/>
    <property type="match status" value="1"/>
</dbReference>
<dbReference type="Pfam" id="PF07992">
    <property type="entry name" value="Pyr_redox_2"/>
    <property type="match status" value="1"/>
</dbReference>
<dbReference type="PRINTS" id="PR00368">
    <property type="entry name" value="FADPNR"/>
</dbReference>
<dbReference type="SUPFAM" id="SSF51905">
    <property type="entry name" value="FAD/NAD(P)-binding domain"/>
    <property type="match status" value="2"/>
</dbReference>
<organism>
    <name type="scientific">Staphylococcus haemolyticus (strain JCSC1435)</name>
    <dbReference type="NCBI Taxonomy" id="279808"/>
    <lineage>
        <taxon>Bacteria</taxon>
        <taxon>Bacillati</taxon>
        <taxon>Bacillota</taxon>
        <taxon>Bacilli</taxon>
        <taxon>Bacillales</taxon>
        <taxon>Staphylococcaceae</taxon>
        <taxon>Staphylococcus</taxon>
    </lineage>
</organism>
<accession>Q4L4V6</accession>
<protein>
    <recommendedName>
        <fullName evidence="1">Type II NADH:quinone oxidoreductase</fullName>
        <ecNumber evidence="1">1.6.5.9</ecNumber>
    </recommendedName>
    <alternativeName>
        <fullName evidence="1">NDH-2</fullName>
    </alternativeName>
</protein>
<reference key="1">
    <citation type="journal article" date="2005" name="J. Bacteriol.">
        <title>Whole-genome sequencing of Staphylococcus haemolyticus uncovers the extreme plasticity of its genome and the evolution of human-colonizing staphylococcal species.</title>
        <authorList>
            <person name="Takeuchi F."/>
            <person name="Watanabe S."/>
            <person name="Baba T."/>
            <person name="Yuzawa H."/>
            <person name="Ito T."/>
            <person name="Morimoto Y."/>
            <person name="Kuroda M."/>
            <person name="Cui L."/>
            <person name="Takahashi M."/>
            <person name="Ankai A."/>
            <person name="Baba S."/>
            <person name="Fukui S."/>
            <person name="Lee J.C."/>
            <person name="Hiramatsu K."/>
        </authorList>
    </citation>
    <scope>NUCLEOTIDE SEQUENCE [LARGE SCALE GENOMIC DNA]</scope>
    <source>
        <strain>JCSC1435</strain>
    </source>
</reference>
<name>NDH_STAHJ</name>
<comment type="function">
    <text evidence="1">Alternative, nonproton pumping NADH:quinone oxidoreductase that delivers electrons to the respiratory chain by oxidation of NADH and reduction of quinones, and contributes to the regeneration of NAD(+).</text>
</comment>
<comment type="catalytic activity">
    <reaction evidence="1">
        <text>a quinone + NADH + H(+) = a quinol + NAD(+)</text>
        <dbReference type="Rhea" id="RHEA:46160"/>
        <dbReference type="ChEBI" id="CHEBI:15378"/>
        <dbReference type="ChEBI" id="CHEBI:24646"/>
        <dbReference type="ChEBI" id="CHEBI:57540"/>
        <dbReference type="ChEBI" id="CHEBI:57945"/>
        <dbReference type="ChEBI" id="CHEBI:132124"/>
        <dbReference type="EC" id="1.6.5.9"/>
    </reaction>
</comment>
<comment type="cofactor">
    <cofactor evidence="1">
        <name>FAD</name>
        <dbReference type="ChEBI" id="CHEBI:57692"/>
    </cofactor>
    <text evidence="1">Binds 1 FAD per subunit.</text>
</comment>
<comment type="subcellular location">
    <subcellularLocation>
        <location evidence="1">Cell membrane</location>
    </subcellularLocation>
</comment>
<comment type="similarity">
    <text evidence="2">Belongs to the NADH dehydrogenase family.</text>
</comment>
<evidence type="ECO:0000250" key="1">
    <source>
        <dbReference type="UniProtKB" id="Q2FZV7"/>
    </source>
</evidence>
<evidence type="ECO:0000305" key="2"/>
<sequence length="402" mass="44352">MAQDRKKVLVLGAGYAGLQTVTKLQKELSADEADITLINKNKYHYEATWLHEASAGTLNYEDLIYPIESVIKEDKVKFINAEVTKIDRNAKKVETNHGIYDYDILVVALGFESETFGINGMKDYAFQIENIETARKLSRHIEDKFANYAASKEKDDKDLAILVGGAGFTGIEFLGELTERIPELCNKYGVDQNKVRVTCVEAAPKMLPMFSDELVNYAVNYLEDRGVEFKIATPIVACNEKGFVVKINDQEQQLEAGTAIWAAGVRGSKLMEESFEGVKRGRIVTKQDLTIEGHDDIFVIGDVSAFIPAGEERPLPTTAQIAMQQGEHVAKSIKNILNGQAATDFEYVDRGTVCSLGAHDGVGIVYGRDITGKKAAFMKKVIDTRAVFKIGGVGLAFKKGKF</sequence>
<proteinExistence type="inferred from homology"/>
<feature type="chain" id="PRO_0000287375" description="Type II NADH:quinone oxidoreductase">
    <location>
        <begin position="1"/>
        <end position="402"/>
    </location>
</feature>
<feature type="active site" evidence="1">
    <location>
        <position position="172"/>
    </location>
</feature>
<feature type="binding site" evidence="1">
    <location>
        <begin position="12"/>
        <end position="16"/>
    </location>
    <ligand>
        <name>FAD</name>
        <dbReference type="ChEBI" id="CHEBI:57692"/>
    </ligand>
</feature>
<feature type="binding site" evidence="1">
    <location>
        <begin position="39"/>
        <end position="40"/>
    </location>
    <ligand>
        <name>FAD</name>
        <dbReference type="ChEBI" id="CHEBI:57692"/>
    </ligand>
</feature>
<feature type="binding site" evidence="1">
    <location>
        <position position="83"/>
    </location>
    <ligand>
        <name>FAD</name>
        <dbReference type="ChEBI" id="CHEBI:57692"/>
    </ligand>
</feature>
<feature type="binding site" evidence="1">
    <location>
        <position position="302"/>
    </location>
    <ligand>
        <name>FAD</name>
        <dbReference type="ChEBI" id="CHEBI:57692"/>
    </ligand>
</feature>
<feature type="binding site" evidence="1">
    <location>
        <begin position="319"/>
        <end position="320"/>
    </location>
    <ligand>
        <name>FAD</name>
        <dbReference type="ChEBI" id="CHEBI:57692"/>
    </ligand>
</feature>
<feature type="binding site" evidence="1">
    <location>
        <position position="379"/>
    </location>
    <ligand>
        <name>FAD</name>
        <dbReference type="ChEBI" id="CHEBI:57692"/>
    </ligand>
</feature>
<keyword id="KW-1003">Cell membrane</keyword>
<keyword id="KW-0274">FAD</keyword>
<keyword id="KW-0285">Flavoprotein</keyword>
<keyword id="KW-0472">Membrane</keyword>
<keyword id="KW-0520">NAD</keyword>
<keyword id="KW-0560">Oxidoreductase</keyword>
<gene>
    <name type="ordered locus">SH2010</name>
</gene>